<organism>
    <name type="scientific">Influenza A virus (strain A/Silky Chicken/Hong Kong/SF189/2001 H5N1 genotype A)</name>
    <dbReference type="NCBI Taxonomy" id="196430"/>
    <lineage>
        <taxon>Viruses</taxon>
        <taxon>Riboviria</taxon>
        <taxon>Orthornavirae</taxon>
        <taxon>Negarnaviricota</taxon>
        <taxon>Polyploviricotina</taxon>
        <taxon>Insthoviricetes</taxon>
        <taxon>Articulavirales</taxon>
        <taxon>Orthomyxoviridae</taxon>
        <taxon>Alphainfluenzavirus</taxon>
        <taxon>Alphainfluenzavirus influenzae</taxon>
        <taxon>Influenza A virus</taxon>
    </lineage>
</organism>
<feature type="chain" id="PRO_0000310915" description="Nucleoprotein">
    <location>
        <begin position="1"/>
        <end position="498"/>
    </location>
</feature>
<feature type="region of interest" description="Disordered" evidence="2">
    <location>
        <begin position="1"/>
        <end position="21"/>
    </location>
</feature>
<feature type="short sequence motif" description="Unconventional nuclear localization signal" evidence="1">
    <location>
        <begin position="1"/>
        <end position="18"/>
    </location>
</feature>
<feature type="short sequence motif" description="Bipartite nuclear localization signal" evidence="1">
    <location>
        <begin position="198"/>
        <end position="216"/>
    </location>
</feature>
<keyword id="KW-0167">Capsid protein</keyword>
<keyword id="KW-1139">Helical capsid protein</keyword>
<keyword id="KW-1048">Host nucleus</keyword>
<keyword id="KW-0945">Host-virus interaction</keyword>
<keyword id="KW-0687">Ribonucleoprotein</keyword>
<keyword id="KW-0694">RNA-binding</keyword>
<keyword id="KW-0543">Viral nucleoprotein</keyword>
<keyword id="KW-1163">Viral penetration into host nucleus</keyword>
<keyword id="KW-0946">Virion</keyword>
<keyword id="KW-1160">Virus entry into host cell</keyword>
<accession>Q809S5</accession>
<gene>
    <name evidence="1" type="primary">NP</name>
</gene>
<proteinExistence type="inferred from homology"/>
<comment type="function">
    <text evidence="1">Encapsidates the negative strand viral RNA, protecting it from nucleases. The encapsidated genomic RNA is termed the ribonucleoprotein (RNP) and serves as template for transcription and replication. The RNP needs to be localized in the host nucleus to start an infectious cycle, but is too large to diffuse through the nuclear pore complex. NP comprises at least 2 nuclear localization signals that are responsible for the active RNP import into the nucleus through cellular importin alpha/beta pathway. Later in the infection, nclear export of RNPs are mediated through viral proteins NEP interacting with M1 which binds nucleoproteins. It is possible that nucleoprotein binds directly host exportin-1/XPO1 and plays an active role in RNPs nuclear export. M1 interaction with RNP seems to hide nucleoprotein's nuclear localization signals. Soon after a virion infects a new cell, M1 dissociates from the RNP under acidification of the virion driven by M2 protein. Dissociation of M1 from RNP unmasks nucleoprotein's nuclear localization signals, targeting the RNP to the nucleus.</text>
</comment>
<comment type="subunit">
    <text evidence="1">Homomultimerizes to form the nucleocapsid. May bind host exportin-1/XPO1. Binds to viral genomic RNA. Protein-RNA contacts are mediated by a combination of electrostatic interactions between positively charged residues and the phosphate backbone and planar interactions between aromatic side chains and bases.</text>
</comment>
<comment type="subcellular location">
    <subcellularLocation>
        <location evidence="1">Virion</location>
    </subcellularLocation>
    <subcellularLocation>
        <location evidence="1">Host nucleus</location>
    </subcellularLocation>
</comment>
<comment type="PTM">
    <text evidence="1">Late in virus-infected cells, may be cleaved from a 56-kDa protein to a 53-kDa protein by a cellular caspase. This cleavage might be a marker for the onset of apoptosis in infected cells or have a specific function in virus host interaction.</text>
</comment>
<comment type="similarity">
    <text evidence="1">Belongs to the influenza viruses nucleoprotein family.</text>
</comment>
<name>NCAP_I01A0</name>
<reference key="1">
    <citation type="journal article" date="2002" name="Proc. Natl. Acad. Sci. U.S.A.">
        <title>Emergence of multiple genotypes of H5N1 avian influenza viruses in Hong Kong SAR.</title>
        <authorList>
            <person name="Guan Y."/>
            <person name="Peiris J.S.M."/>
            <person name="Lipatov A.S."/>
            <person name="Ellis T.M."/>
            <person name="Dyrting K.C."/>
            <person name="Krauss S."/>
            <person name="Zhang L.J."/>
            <person name="Webster R.G."/>
            <person name="Shortridge K.F."/>
        </authorList>
    </citation>
    <scope>NUCLEOTIDE SEQUENCE [GENOMIC RNA]</scope>
</reference>
<reference key="2">
    <citation type="submission" date="2008-03" db="EMBL/GenBank/DDBJ databases">
        <authorList>
            <person name="Li K.S."/>
            <person name="Xu K.M."/>
            <person name="Guan Y."/>
        </authorList>
    </citation>
    <scope>SEQUENCE REVISION</scope>
</reference>
<protein>
    <recommendedName>
        <fullName evidence="1">Nucleoprotein</fullName>
    </recommendedName>
    <alternativeName>
        <fullName evidence="1">Nucleocapsid protein</fullName>
        <shortName evidence="1">Protein N</shortName>
    </alternativeName>
</protein>
<organismHost>
    <name type="scientific">Aves</name>
    <dbReference type="NCBI Taxonomy" id="8782"/>
</organismHost>
<organismHost>
    <name type="scientific">Felis catus</name>
    <name type="common">Cat</name>
    <name type="synonym">Felis silvestris catus</name>
    <dbReference type="NCBI Taxonomy" id="9685"/>
</organismHost>
<organismHost>
    <name type="scientific">Homo sapiens</name>
    <name type="common">Human</name>
    <dbReference type="NCBI Taxonomy" id="9606"/>
</organismHost>
<organismHost>
    <name type="scientific">Panthera pardus</name>
    <name type="common">Leopard</name>
    <name type="synonym">Felis pardus</name>
    <dbReference type="NCBI Taxonomy" id="9691"/>
</organismHost>
<organismHost>
    <name type="scientific">Panthera tigris</name>
    <name type="common">Tiger</name>
    <dbReference type="NCBI Taxonomy" id="9694"/>
</organismHost>
<organismHost>
    <name type="scientific">Sus scrofa</name>
    <name type="common">Pig</name>
    <dbReference type="NCBI Taxonomy" id="9823"/>
</organismHost>
<sequence length="498" mass="56267">MASQGTKRSYEQMETGGERQNATEIRASVGRMVGGIGRFYIQMCTELKLSDYEGRLIQNSITMERMVLSAFDERRNKYLEEHPSAGKDPKKTGGPIYRRRDGKWVRELILYDKEEIRRIWRQANNGEDATAGLTHLMIWHSNLNDATYQRTRALVRTGMDPRMCSLMQGSTLPRRSGAAGAAVKGVGTMVMELIRMIKRGINDRNFWRGENGRRTRIAYERMCNILKGKFQTAAQRAMMDQVRESRNPGNAEIEDLIFLARSALILRGSVAHKSCLPACVYGLAVASGYDFEREGYSLVGIDPFRLLQNSQVFSLIRPNENPAHKSQLVWMACHSAAFEDLRVSSFIRGTRIVPRGQLSTRGVQIASNENMDTMDSNTLELRSRYWAIRTRSGGNTNQQRASAGQISVQPTFSVQRNLPFERATIMAAFTGNTEGRTSDMRTEIIRMMESAKPEDVSFQGRGVFELSDEKATNPIVPSFDMSNEGSYFFGDNAEEFEN</sequence>
<evidence type="ECO:0000255" key="1">
    <source>
        <dbReference type="HAMAP-Rule" id="MF_04070"/>
    </source>
</evidence>
<evidence type="ECO:0000256" key="2">
    <source>
        <dbReference type="SAM" id="MobiDB-lite"/>
    </source>
</evidence>
<dbReference type="EMBL" id="AF509122">
    <property type="protein sequence ID" value="AAO52965.2"/>
    <property type="molecule type" value="Genomic_DNA"/>
</dbReference>
<dbReference type="SMR" id="Q809S5"/>
<dbReference type="GO" id="GO:0019029">
    <property type="term" value="C:helical viral capsid"/>
    <property type="evidence" value="ECO:0007669"/>
    <property type="project" value="UniProtKB-UniRule"/>
</dbReference>
<dbReference type="GO" id="GO:0043657">
    <property type="term" value="C:host cell"/>
    <property type="evidence" value="ECO:0007669"/>
    <property type="project" value="GOC"/>
</dbReference>
<dbReference type="GO" id="GO:0042025">
    <property type="term" value="C:host cell nucleus"/>
    <property type="evidence" value="ECO:0007669"/>
    <property type="project" value="UniProtKB-SubCell"/>
</dbReference>
<dbReference type="GO" id="GO:1990904">
    <property type="term" value="C:ribonucleoprotein complex"/>
    <property type="evidence" value="ECO:0007669"/>
    <property type="project" value="UniProtKB-KW"/>
</dbReference>
<dbReference type="GO" id="GO:0019013">
    <property type="term" value="C:viral nucleocapsid"/>
    <property type="evidence" value="ECO:0007669"/>
    <property type="project" value="UniProtKB-UniRule"/>
</dbReference>
<dbReference type="GO" id="GO:0003723">
    <property type="term" value="F:RNA binding"/>
    <property type="evidence" value="ECO:0007669"/>
    <property type="project" value="UniProtKB-UniRule"/>
</dbReference>
<dbReference type="GO" id="GO:0005198">
    <property type="term" value="F:structural molecule activity"/>
    <property type="evidence" value="ECO:0007669"/>
    <property type="project" value="UniProtKB-UniRule"/>
</dbReference>
<dbReference type="GO" id="GO:0046718">
    <property type="term" value="P:symbiont entry into host cell"/>
    <property type="evidence" value="ECO:0007669"/>
    <property type="project" value="UniProtKB-KW"/>
</dbReference>
<dbReference type="GO" id="GO:0075732">
    <property type="term" value="P:viral penetration into host nucleus"/>
    <property type="evidence" value="ECO:0007669"/>
    <property type="project" value="UniProtKB-UniRule"/>
</dbReference>
<dbReference type="HAMAP" id="MF_04070">
    <property type="entry name" value="INFV_NCAP"/>
    <property type="match status" value="1"/>
</dbReference>
<dbReference type="InterPro" id="IPR002141">
    <property type="entry name" value="Flu_NP"/>
</dbReference>
<dbReference type="Pfam" id="PF00506">
    <property type="entry name" value="Flu_NP"/>
    <property type="match status" value="1"/>
</dbReference>
<dbReference type="SUPFAM" id="SSF161003">
    <property type="entry name" value="flu NP-like"/>
    <property type="match status" value="1"/>
</dbReference>